<proteinExistence type="evidence at protein level"/>
<comment type="function">
    <text evidence="5 6">May be involved in intracellular vesicle traffic. Inhibits ATF4-mediated transcription, possibly by dimerizing with ATF4 to form inactive dimers that cannot bind DNA. May be involved in regulating bone mass density through an ATF4-dependent pathway. May be involved in cell cycle progression.</text>
</comment>
<comment type="subunit">
    <text evidence="5">Binds to the C-terminal coiled coil region of syntaxin family members STX1A, STX3A and STX4A. Forms a heterodimer with ATF4 in osteoblasts.</text>
</comment>
<comment type="subcellular location">
    <subcellularLocation>
        <location evidence="5">Nucleus membrane</location>
    </subcellularLocation>
    <subcellularLocation>
        <location evidence="1">Cytoplasm</location>
        <location evidence="1">Cytosol</location>
    </subcellularLocation>
</comment>
<comment type="alternative products">
    <event type="alternative splicing"/>
    <isoform>
        <id>Q9NUQ3-1</id>
        <name>1</name>
        <sequence type="displayed"/>
    </isoform>
    <isoform>
        <id>Q9NUQ3-2</id>
        <name>2</name>
        <sequence type="described" ref="VSP_039391"/>
    </isoform>
</comment>
<comment type="tissue specificity">
    <text evidence="4">Ubiquitously expressed. Expressed at high level in heart and skeletal muscle. Expressed in brain, placenta, lung, liver, kidney and pancreas.</text>
</comment>
<comment type="induction">
    <text evidence="6">By bacterial lipopolysaccharides (LPS) in Hep-G2 cells.</text>
</comment>
<comment type="miscellaneous">
    <text>Depletion of TXLNG by siRNA decreases the percentage of Hep-G2 cells arrested in G1 phase.</text>
</comment>
<comment type="similarity">
    <text evidence="8">Belongs to the taxilin family.</text>
</comment>
<feature type="chain" id="PRO_0000189426" description="Gamma-taxilin">
    <location>
        <begin position="1"/>
        <end position="528"/>
    </location>
</feature>
<feature type="region of interest" description="Disordered" evidence="3">
    <location>
        <begin position="1"/>
        <end position="36"/>
    </location>
</feature>
<feature type="region of interest" description="Disordered" evidence="3">
    <location>
        <begin position="102"/>
        <end position="130"/>
    </location>
</feature>
<feature type="region of interest" description="Disordered" evidence="3">
    <location>
        <begin position="486"/>
        <end position="528"/>
    </location>
</feature>
<feature type="coiled-coil region" evidence="2">
    <location>
        <begin position="153"/>
        <end position="464"/>
    </location>
</feature>
<feature type="compositionally biased region" description="Basic and acidic residues" evidence="3">
    <location>
        <begin position="1"/>
        <end position="10"/>
    </location>
</feature>
<feature type="compositionally biased region" description="Basic and acidic residues" evidence="3">
    <location>
        <begin position="104"/>
        <end position="118"/>
    </location>
</feature>
<feature type="compositionally biased region" description="Polar residues" evidence="3">
    <location>
        <begin position="508"/>
        <end position="520"/>
    </location>
</feature>
<feature type="modified residue" description="Omega-N-methylarginine" evidence="15">
    <location>
        <position position="12"/>
    </location>
</feature>
<feature type="modified residue" description="Omega-N-methylarginine" evidence="15">
    <location>
        <position position="24"/>
    </location>
</feature>
<feature type="modified residue" description="Phosphoserine" evidence="1">
    <location>
        <position position="79"/>
    </location>
</feature>
<feature type="modified residue" description="Phosphoserine" evidence="11 14">
    <location>
        <position position="86"/>
    </location>
</feature>
<feature type="modified residue" description="Phosphoserine" evidence="9 10 12 14">
    <location>
        <position position="97"/>
    </location>
</feature>
<feature type="modified residue" description="Phosphoserine" evidence="10 14 16">
    <location>
        <position position="105"/>
    </location>
</feature>
<feature type="modified residue" description="Phosphotyrosine" evidence="12">
    <location>
        <position position="283"/>
    </location>
</feature>
<feature type="modified residue" description="Phosphoserine" evidence="13">
    <location>
        <position position="517"/>
    </location>
</feature>
<feature type="splice variant" id="VSP_039391" description="In isoform 2." evidence="7">
    <location>
        <begin position="35"/>
        <end position="166"/>
    </location>
</feature>
<feature type="sequence variant" id="VAR_019809" description="In dbSNP:rs5969783.">
    <original>I</original>
    <variation>V</variation>
    <location>
        <position position="246"/>
    </location>
</feature>
<feature type="sequence conflict" description="In Ref. 2; BAA92068." evidence="8" ref="2">
    <original>N</original>
    <variation>D</variation>
    <location>
        <position position="249"/>
    </location>
</feature>
<feature type="sequence conflict" description="In Ref. 2; BAA92068." evidence="8" ref="2">
    <original>H</original>
    <variation>R</variation>
    <location>
        <position position="296"/>
    </location>
</feature>
<feature type="sequence conflict" description="In Ref. 6; AAF70546." evidence="8" ref="6">
    <original>K</original>
    <variation>I</variation>
    <location>
        <position position="402"/>
    </location>
</feature>
<dbReference type="EMBL" id="AY739713">
    <property type="protein sequence ID" value="AAW65982.1"/>
    <property type="molecule type" value="mRNA"/>
</dbReference>
<dbReference type="EMBL" id="AK002071">
    <property type="protein sequence ID" value="BAA92068.1"/>
    <property type="molecule type" value="mRNA"/>
</dbReference>
<dbReference type="EMBL" id="AL929302">
    <property type="status" value="NOT_ANNOTATED_CDS"/>
    <property type="molecule type" value="Genomic_DNA"/>
</dbReference>
<dbReference type="EMBL" id="BX004861">
    <property type="status" value="NOT_ANNOTATED_CDS"/>
    <property type="molecule type" value="Genomic_DNA"/>
</dbReference>
<dbReference type="EMBL" id="CH471074">
    <property type="protein sequence ID" value="EAW98918.1"/>
    <property type="molecule type" value="Genomic_DNA"/>
</dbReference>
<dbReference type="EMBL" id="BC101572">
    <property type="protein sequence ID" value="AAI01573.1"/>
    <property type="molecule type" value="mRNA"/>
</dbReference>
<dbReference type="EMBL" id="BC101576">
    <property type="protein sequence ID" value="AAI01577.1"/>
    <property type="molecule type" value="mRNA"/>
</dbReference>
<dbReference type="EMBL" id="AF143740">
    <property type="protein sequence ID" value="AAF70546.2"/>
    <property type="molecule type" value="mRNA"/>
</dbReference>
<dbReference type="CCDS" id="CCDS14178.1">
    <molecule id="Q9NUQ3-1"/>
</dbReference>
<dbReference type="CCDS" id="CCDS55373.1">
    <molecule id="Q9NUQ3-2"/>
</dbReference>
<dbReference type="RefSeq" id="NP_001162154.1">
    <molecule id="Q9NUQ3-2"/>
    <property type="nucleotide sequence ID" value="NM_001168683.2"/>
</dbReference>
<dbReference type="RefSeq" id="NP_060830.2">
    <molecule id="Q9NUQ3-1"/>
    <property type="nucleotide sequence ID" value="NM_018360.3"/>
</dbReference>
<dbReference type="SMR" id="Q9NUQ3"/>
<dbReference type="BioGRID" id="120901">
    <property type="interactions" value="105"/>
</dbReference>
<dbReference type="FunCoup" id="Q9NUQ3">
    <property type="interactions" value="1945"/>
</dbReference>
<dbReference type="IntAct" id="Q9NUQ3">
    <property type="interactions" value="55"/>
</dbReference>
<dbReference type="MINT" id="Q9NUQ3"/>
<dbReference type="STRING" id="9606.ENSP00000369465"/>
<dbReference type="GlyGen" id="Q9NUQ3">
    <property type="glycosylation" value="1 site, 1 O-linked glycan (1 site)"/>
</dbReference>
<dbReference type="iPTMnet" id="Q9NUQ3"/>
<dbReference type="MetOSite" id="Q9NUQ3"/>
<dbReference type="PhosphoSitePlus" id="Q9NUQ3"/>
<dbReference type="SwissPalm" id="Q9NUQ3"/>
<dbReference type="BioMuta" id="TXLNG"/>
<dbReference type="DMDM" id="212276476"/>
<dbReference type="jPOST" id="Q9NUQ3"/>
<dbReference type="MassIVE" id="Q9NUQ3"/>
<dbReference type="PaxDb" id="9606-ENSP00000369465"/>
<dbReference type="PeptideAtlas" id="Q9NUQ3"/>
<dbReference type="ProteomicsDB" id="82707">
    <molecule id="Q9NUQ3-1"/>
</dbReference>
<dbReference type="ProteomicsDB" id="82708">
    <molecule id="Q9NUQ3-2"/>
</dbReference>
<dbReference type="Pumba" id="Q9NUQ3"/>
<dbReference type="Antibodypedia" id="410">
    <property type="antibodies" value="87 antibodies from 16 providers"/>
</dbReference>
<dbReference type="DNASU" id="55787"/>
<dbReference type="Ensembl" id="ENST00000380122.10">
    <molecule id="Q9NUQ3-1"/>
    <property type="protein sequence ID" value="ENSP00000369465.5"/>
    <property type="gene ID" value="ENSG00000086712.13"/>
</dbReference>
<dbReference type="Ensembl" id="ENST00000398155.4">
    <molecule id="Q9NUQ3-2"/>
    <property type="protein sequence ID" value="ENSP00000381222.4"/>
    <property type="gene ID" value="ENSG00000086712.13"/>
</dbReference>
<dbReference type="GeneID" id="55787"/>
<dbReference type="KEGG" id="hsa:55787"/>
<dbReference type="MANE-Select" id="ENST00000380122.10">
    <property type="protein sequence ID" value="ENSP00000369465.5"/>
    <property type="RefSeq nucleotide sequence ID" value="NM_018360.3"/>
    <property type="RefSeq protein sequence ID" value="NP_060830.2"/>
</dbReference>
<dbReference type="UCSC" id="uc004cxq.3">
    <molecule id="Q9NUQ3-1"/>
    <property type="organism name" value="human"/>
</dbReference>
<dbReference type="AGR" id="HGNC:18578"/>
<dbReference type="CTD" id="55787"/>
<dbReference type="DisGeNET" id="55787"/>
<dbReference type="GeneCards" id="TXLNG"/>
<dbReference type="HGNC" id="HGNC:18578">
    <property type="gene designation" value="TXLNG"/>
</dbReference>
<dbReference type="HPA" id="ENSG00000086712">
    <property type="expression patterns" value="Low tissue specificity"/>
</dbReference>
<dbReference type="MIM" id="300677">
    <property type="type" value="gene"/>
</dbReference>
<dbReference type="neXtProt" id="NX_Q9NUQ3"/>
<dbReference type="OpenTargets" id="ENSG00000086712"/>
<dbReference type="PharmGKB" id="PA38588"/>
<dbReference type="VEuPathDB" id="HostDB:ENSG00000086712"/>
<dbReference type="eggNOG" id="KOG1850">
    <property type="taxonomic scope" value="Eukaryota"/>
</dbReference>
<dbReference type="GeneTree" id="ENSGT00940000155463"/>
<dbReference type="HOGENOM" id="CLU_025501_4_1_1"/>
<dbReference type="InParanoid" id="Q9NUQ3"/>
<dbReference type="OMA" id="PKELNTA"/>
<dbReference type="OrthoDB" id="425555at2759"/>
<dbReference type="PAN-GO" id="Q9NUQ3">
    <property type="GO annotations" value="1 GO annotation based on evolutionary models"/>
</dbReference>
<dbReference type="PhylomeDB" id="Q9NUQ3"/>
<dbReference type="TreeFam" id="TF318595"/>
<dbReference type="PathwayCommons" id="Q9NUQ3"/>
<dbReference type="SignaLink" id="Q9NUQ3"/>
<dbReference type="BioGRID-ORCS" id="55787">
    <property type="hits" value="10 hits in 777 CRISPR screens"/>
</dbReference>
<dbReference type="ChiTaRS" id="TXLNG">
    <property type="organism name" value="human"/>
</dbReference>
<dbReference type="GenomeRNAi" id="55787"/>
<dbReference type="Pharos" id="Q9NUQ3">
    <property type="development level" value="Tbio"/>
</dbReference>
<dbReference type="PRO" id="PR:Q9NUQ3"/>
<dbReference type="Proteomes" id="UP000005640">
    <property type="component" value="Chromosome X"/>
</dbReference>
<dbReference type="RNAct" id="Q9NUQ3">
    <property type="molecule type" value="protein"/>
</dbReference>
<dbReference type="Bgee" id="ENSG00000086712">
    <property type="expression patterns" value="Expressed in secondary oocyte and 174 other cell types or tissues"/>
</dbReference>
<dbReference type="GO" id="GO:0005829">
    <property type="term" value="C:cytosol"/>
    <property type="evidence" value="ECO:0000250"/>
    <property type="project" value="UniProtKB"/>
</dbReference>
<dbReference type="GO" id="GO:0031965">
    <property type="term" value="C:nuclear membrane"/>
    <property type="evidence" value="ECO:0000314"/>
    <property type="project" value="UniProtKB"/>
</dbReference>
<dbReference type="GO" id="GO:0140297">
    <property type="term" value="F:DNA-binding transcription factor binding"/>
    <property type="evidence" value="ECO:0000353"/>
    <property type="project" value="UniProtKB"/>
</dbReference>
<dbReference type="GO" id="GO:0019905">
    <property type="term" value="F:syntaxin binding"/>
    <property type="evidence" value="ECO:0007669"/>
    <property type="project" value="InterPro"/>
</dbReference>
<dbReference type="GO" id="GO:0030500">
    <property type="term" value="P:regulation of bone mineralization"/>
    <property type="evidence" value="ECO:0000250"/>
    <property type="project" value="UniProtKB"/>
</dbReference>
<dbReference type="GO" id="GO:0051726">
    <property type="term" value="P:regulation of cell cycle"/>
    <property type="evidence" value="ECO:0000250"/>
    <property type="project" value="UniProtKB"/>
</dbReference>
<dbReference type="GO" id="GO:0010564">
    <property type="term" value="P:regulation of cell cycle process"/>
    <property type="evidence" value="ECO:0000315"/>
    <property type="project" value="UniProtKB"/>
</dbReference>
<dbReference type="InterPro" id="IPR026183">
    <property type="entry name" value="Taxilin_fam"/>
</dbReference>
<dbReference type="PANTHER" id="PTHR16127:SF14">
    <property type="entry name" value="GAMMA-TAXILIN"/>
    <property type="match status" value="1"/>
</dbReference>
<dbReference type="PANTHER" id="PTHR16127">
    <property type="entry name" value="TAXILIN"/>
    <property type="match status" value="1"/>
</dbReference>
<dbReference type="Pfam" id="PF09728">
    <property type="entry name" value="Taxilin"/>
    <property type="match status" value="1"/>
</dbReference>
<evidence type="ECO:0000250" key="1">
    <source>
        <dbReference type="UniProtKB" id="Q8BHN1"/>
    </source>
</evidence>
<evidence type="ECO:0000255" key="2"/>
<evidence type="ECO:0000256" key="3">
    <source>
        <dbReference type="SAM" id="MobiDB-lite"/>
    </source>
</evidence>
<evidence type="ECO:0000269" key="4">
    <source>
    </source>
</evidence>
<evidence type="ECO:0000269" key="5">
    <source>
    </source>
</evidence>
<evidence type="ECO:0000269" key="6">
    <source>
    </source>
</evidence>
<evidence type="ECO:0000303" key="7">
    <source ref="1"/>
</evidence>
<evidence type="ECO:0000305" key="8"/>
<evidence type="ECO:0007744" key="9">
    <source>
    </source>
</evidence>
<evidence type="ECO:0007744" key="10">
    <source>
    </source>
</evidence>
<evidence type="ECO:0007744" key="11">
    <source>
    </source>
</evidence>
<evidence type="ECO:0007744" key="12">
    <source>
    </source>
</evidence>
<evidence type="ECO:0007744" key="13">
    <source>
    </source>
</evidence>
<evidence type="ECO:0007744" key="14">
    <source>
    </source>
</evidence>
<evidence type="ECO:0007744" key="15">
    <source>
    </source>
</evidence>
<evidence type="ECO:0007744" key="16">
    <source>
    </source>
</evidence>
<gene>
    <name type="primary">TXLNG</name>
    <name type="synonym">CXorf15</name>
    <name type="synonym">ELRG</name>
    <name type="synonym">LSR5</name>
</gene>
<organism>
    <name type="scientific">Homo sapiens</name>
    <name type="common">Human</name>
    <dbReference type="NCBI Taxonomy" id="9606"/>
    <lineage>
        <taxon>Eukaryota</taxon>
        <taxon>Metazoa</taxon>
        <taxon>Chordata</taxon>
        <taxon>Craniata</taxon>
        <taxon>Vertebrata</taxon>
        <taxon>Euteleostomi</taxon>
        <taxon>Mammalia</taxon>
        <taxon>Eutheria</taxon>
        <taxon>Euarchontoglires</taxon>
        <taxon>Primates</taxon>
        <taxon>Haplorrhini</taxon>
        <taxon>Catarrhini</taxon>
        <taxon>Hominidae</taxon>
        <taxon>Homo</taxon>
    </lineage>
</organism>
<sequence>MATRVEEAARGRGGGAEEATEAGRGGRRRSPRQKFEIGTMEEAGICGLGVKADMLCNSQSNDILQHQGSNCGGTSNKHSLEEDEGSDFITENRNLVSPAYCTQESREEIPGGEARTDPPDGQQDSECNRNKEKTLGKEVLLLMQALNTLSTPEEKLAALCKKYADLLEESRSVQKQMKILQKKQAQIVKEKVHLQSEHSKAILARSKLESLCRELQRHNKTLKEENMQQAREEEERRKEATAHFQITLNEIQAQLEQHDIHNAKLRQENIELGEKLKKLIEQYALREEHIDKVFKHKELQQQLVDAKLQQTTQLIKEADEKHQREREFLLKEATESRHKYEQMKQQEVQLKQQLSLYMDKFEEFQTTMAKSNELFTTFRQEMEKMTKKIKKLEKETIIWRTKWENNNKALLQMAEEKTVRDKEYKALQIKLERLEKLCRALQTERNELNEKVEVLKEQVSIKAAIKAANRDLATPVMQPCTALDSHKELNTSSKRALGAHLEAEPKSQRSAVQKPPSTGSAPAIESVD</sequence>
<name>TXLNG_HUMAN</name>
<protein>
    <recommendedName>
        <fullName>Gamma-taxilin</fullName>
    </recommendedName>
    <alternativeName>
        <fullName>Environmental lipopolysaccharide-responding gene protein</fullName>
    </alternativeName>
    <alternativeName>
        <fullName>Factor inhibiting ATF4-mediated transcription</fullName>
        <shortName>FIAT</shortName>
    </alternativeName>
    <alternativeName>
        <fullName>Lipopolysaccharide-specific response protein 5</fullName>
    </alternativeName>
</protein>
<reference key="1">
    <citation type="submission" date="2004-09" db="EMBL/GenBank/DDBJ databases">
        <title>Anti-leukemia-specific humoral immune response in children with T-lineage acute lymphoblastic leukemia.</title>
        <authorList>
            <person name="Dohnal A.M."/>
            <person name="Panzer-Gruemayer R.E."/>
        </authorList>
    </citation>
    <scope>NUCLEOTIDE SEQUENCE [MRNA] (ISOFORM 2)</scope>
</reference>
<reference key="2">
    <citation type="journal article" date="2004" name="Nat. Genet.">
        <title>Complete sequencing and characterization of 21,243 full-length human cDNAs.</title>
        <authorList>
            <person name="Ota T."/>
            <person name="Suzuki Y."/>
            <person name="Nishikawa T."/>
            <person name="Otsuki T."/>
            <person name="Sugiyama T."/>
            <person name="Irie R."/>
            <person name="Wakamatsu A."/>
            <person name="Hayashi K."/>
            <person name="Sato H."/>
            <person name="Nagai K."/>
            <person name="Kimura K."/>
            <person name="Makita H."/>
            <person name="Sekine M."/>
            <person name="Obayashi M."/>
            <person name="Nishi T."/>
            <person name="Shibahara T."/>
            <person name="Tanaka T."/>
            <person name="Ishii S."/>
            <person name="Yamamoto J."/>
            <person name="Saito K."/>
            <person name="Kawai Y."/>
            <person name="Isono Y."/>
            <person name="Nakamura Y."/>
            <person name="Nagahari K."/>
            <person name="Murakami K."/>
            <person name="Yasuda T."/>
            <person name="Iwayanagi T."/>
            <person name="Wagatsuma M."/>
            <person name="Shiratori A."/>
            <person name="Sudo H."/>
            <person name="Hosoiri T."/>
            <person name="Kaku Y."/>
            <person name="Kodaira H."/>
            <person name="Kondo H."/>
            <person name="Sugawara M."/>
            <person name="Takahashi M."/>
            <person name="Kanda K."/>
            <person name="Yokoi T."/>
            <person name="Furuya T."/>
            <person name="Kikkawa E."/>
            <person name="Omura Y."/>
            <person name="Abe K."/>
            <person name="Kamihara K."/>
            <person name="Katsuta N."/>
            <person name="Sato K."/>
            <person name="Tanikawa M."/>
            <person name="Yamazaki M."/>
            <person name="Ninomiya K."/>
            <person name="Ishibashi T."/>
            <person name="Yamashita H."/>
            <person name="Murakawa K."/>
            <person name="Fujimori K."/>
            <person name="Tanai H."/>
            <person name="Kimata M."/>
            <person name="Watanabe M."/>
            <person name="Hiraoka S."/>
            <person name="Chiba Y."/>
            <person name="Ishida S."/>
            <person name="Ono Y."/>
            <person name="Takiguchi S."/>
            <person name="Watanabe S."/>
            <person name="Yosida M."/>
            <person name="Hotuta T."/>
            <person name="Kusano J."/>
            <person name="Kanehori K."/>
            <person name="Takahashi-Fujii A."/>
            <person name="Hara H."/>
            <person name="Tanase T.-O."/>
            <person name="Nomura Y."/>
            <person name="Togiya S."/>
            <person name="Komai F."/>
            <person name="Hara R."/>
            <person name="Takeuchi K."/>
            <person name="Arita M."/>
            <person name="Imose N."/>
            <person name="Musashino K."/>
            <person name="Yuuki H."/>
            <person name="Oshima A."/>
            <person name="Sasaki N."/>
            <person name="Aotsuka S."/>
            <person name="Yoshikawa Y."/>
            <person name="Matsunawa H."/>
            <person name="Ichihara T."/>
            <person name="Shiohata N."/>
            <person name="Sano S."/>
            <person name="Moriya S."/>
            <person name="Momiyama H."/>
            <person name="Satoh N."/>
            <person name="Takami S."/>
            <person name="Terashima Y."/>
            <person name="Suzuki O."/>
            <person name="Nakagawa S."/>
            <person name="Senoh A."/>
            <person name="Mizoguchi H."/>
            <person name="Goto Y."/>
            <person name="Shimizu F."/>
            <person name="Wakebe H."/>
            <person name="Hishigaki H."/>
            <person name="Watanabe T."/>
            <person name="Sugiyama A."/>
            <person name="Takemoto M."/>
            <person name="Kawakami B."/>
            <person name="Yamazaki M."/>
            <person name="Watanabe K."/>
            <person name="Kumagai A."/>
            <person name="Itakura S."/>
            <person name="Fukuzumi Y."/>
            <person name="Fujimori Y."/>
            <person name="Komiyama M."/>
            <person name="Tashiro H."/>
            <person name="Tanigami A."/>
            <person name="Fujiwara T."/>
            <person name="Ono T."/>
            <person name="Yamada K."/>
            <person name="Fujii Y."/>
            <person name="Ozaki K."/>
            <person name="Hirao M."/>
            <person name="Ohmori Y."/>
            <person name="Kawabata A."/>
            <person name="Hikiji T."/>
            <person name="Kobatake N."/>
            <person name="Inagaki H."/>
            <person name="Ikema Y."/>
            <person name="Okamoto S."/>
            <person name="Okitani R."/>
            <person name="Kawakami T."/>
            <person name="Noguchi S."/>
            <person name="Itoh T."/>
            <person name="Shigeta K."/>
            <person name="Senba T."/>
            <person name="Matsumura K."/>
            <person name="Nakajima Y."/>
            <person name="Mizuno T."/>
            <person name="Morinaga M."/>
            <person name="Sasaki M."/>
            <person name="Togashi T."/>
            <person name="Oyama M."/>
            <person name="Hata H."/>
            <person name="Watanabe M."/>
            <person name="Komatsu T."/>
            <person name="Mizushima-Sugano J."/>
            <person name="Satoh T."/>
            <person name="Shirai Y."/>
            <person name="Takahashi Y."/>
            <person name="Nakagawa K."/>
            <person name="Okumura K."/>
            <person name="Nagase T."/>
            <person name="Nomura N."/>
            <person name="Kikuchi H."/>
            <person name="Masuho Y."/>
            <person name="Yamashita R."/>
            <person name="Nakai K."/>
            <person name="Yada T."/>
            <person name="Nakamura Y."/>
            <person name="Ohara O."/>
            <person name="Isogai T."/>
            <person name="Sugano S."/>
        </authorList>
    </citation>
    <scope>NUCLEOTIDE SEQUENCE [LARGE SCALE MRNA] (ISOFORM 1)</scope>
    <source>
        <tissue>Placenta</tissue>
    </source>
</reference>
<reference key="3">
    <citation type="journal article" date="2005" name="Nature">
        <title>The DNA sequence of the human X chromosome.</title>
        <authorList>
            <person name="Ross M.T."/>
            <person name="Grafham D.V."/>
            <person name="Coffey A.J."/>
            <person name="Scherer S."/>
            <person name="McLay K."/>
            <person name="Muzny D."/>
            <person name="Platzer M."/>
            <person name="Howell G.R."/>
            <person name="Burrows C."/>
            <person name="Bird C.P."/>
            <person name="Frankish A."/>
            <person name="Lovell F.L."/>
            <person name="Howe K.L."/>
            <person name="Ashurst J.L."/>
            <person name="Fulton R.S."/>
            <person name="Sudbrak R."/>
            <person name="Wen G."/>
            <person name="Jones M.C."/>
            <person name="Hurles M.E."/>
            <person name="Andrews T.D."/>
            <person name="Scott C.E."/>
            <person name="Searle S."/>
            <person name="Ramser J."/>
            <person name="Whittaker A."/>
            <person name="Deadman R."/>
            <person name="Carter N.P."/>
            <person name="Hunt S.E."/>
            <person name="Chen R."/>
            <person name="Cree A."/>
            <person name="Gunaratne P."/>
            <person name="Havlak P."/>
            <person name="Hodgson A."/>
            <person name="Metzker M.L."/>
            <person name="Richards S."/>
            <person name="Scott G."/>
            <person name="Steffen D."/>
            <person name="Sodergren E."/>
            <person name="Wheeler D.A."/>
            <person name="Worley K.C."/>
            <person name="Ainscough R."/>
            <person name="Ambrose K.D."/>
            <person name="Ansari-Lari M.A."/>
            <person name="Aradhya S."/>
            <person name="Ashwell R.I."/>
            <person name="Babbage A.K."/>
            <person name="Bagguley C.L."/>
            <person name="Ballabio A."/>
            <person name="Banerjee R."/>
            <person name="Barker G.E."/>
            <person name="Barlow K.F."/>
            <person name="Barrett I.P."/>
            <person name="Bates K.N."/>
            <person name="Beare D.M."/>
            <person name="Beasley H."/>
            <person name="Beasley O."/>
            <person name="Beck A."/>
            <person name="Bethel G."/>
            <person name="Blechschmidt K."/>
            <person name="Brady N."/>
            <person name="Bray-Allen S."/>
            <person name="Bridgeman A.M."/>
            <person name="Brown A.J."/>
            <person name="Brown M.J."/>
            <person name="Bonnin D."/>
            <person name="Bruford E.A."/>
            <person name="Buhay C."/>
            <person name="Burch P."/>
            <person name="Burford D."/>
            <person name="Burgess J."/>
            <person name="Burrill W."/>
            <person name="Burton J."/>
            <person name="Bye J.M."/>
            <person name="Carder C."/>
            <person name="Carrel L."/>
            <person name="Chako J."/>
            <person name="Chapman J.C."/>
            <person name="Chavez D."/>
            <person name="Chen E."/>
            <person name="Chen G."/>
            <person name="Chen Y."/>
            <person name="Chen Z."/>
            <person name="Chinault C."/>
            <person name="Ciccodicola A."/>
            <person name="Clark S.Y."/>
            <person name="Clarke G."/>
            <person name="Clee C.M."/>
            <person name="Clegg S."/>
            <person name="Clerc-Blankenburg K."/>
            <person name="Clifford K."/>
            <person name="Cobley V."/>
            <person name="Cole C.G."/>
            <person name="Conquer J.S."/>
            <person name="Corby N."/>
            <person name="Connor R.E."/>
            <person name="David R."/>
            <person name="Davies J."/>
            <person name="Davis C."/>
            <person name="Davis J."/>
            <person name="Delgado O."/>
            <person name="Deshazo D."/>
            <person name="Dhami P."/>
            <person name="Ding Y."/>
            <person name="Dinh H."/>
            <person name="Dodsworth S."/>
            <person name="Draper H."/>
            <person name="Dugan-Rocha S."/>
            <person name="Dunham A."/>
            <person name="Dunn M."/>
            <person name="Durbin K.J."/>
            <person name="Dutta I."/>
            <person name="Eades T."/>
            <person name="Ellwood M."/>
            <person name="Emery-Cohen A."/>
            <person name="Errington H."/>
            <person name="Evans K.L."/>
            <person name="Faulkner L."/>
            <person name="Francis F."/>
            <person name="Frankland J."/>
            <person name="Fraser A.E."/>
            <person name="Galgoczy P."/>
            <person name="Gilbert J."/>
            <person name="Gill R."/>
            <person name="Gloeckner G."/>
            <person name="Gregory S.G."/>
            <person name="Gribble S."/>
            <person name="Griffiths C."/>
            <person name="Grocock R."/>
            <person name="Gu Y."/>
            <person name="Gwilliam R."/>
            <person name="Hamilton C."/>
            <person name="Hart E.A."/>
            <person name="Hawes A."/>
            <person name="Heath P.D."/>
            <person name="Heitmann K."/>
            <person name="Hennig S."/>
            <person name="Hernandez J."/>
            <person name="Hinzmann B."/>
            <person name="Ho S."/>
            <person name="Hoffs M."/>
            <person name="Howden P.J."/>
            <person name="Huckle E.J."/>
            <person name="Hume J."/>
            <person name="Hunt P.J."/>
            <person name="Hunt A.R."/>
            <person name="Isherwood J."/>
            <person name="Jacob L."/>
            <person name="Johnson D."/>
            <person name="Jones S."/>
            <person name="de Jong P.J."/>
            <person name="Joseph S.S."/>
            <person name="Keenan S."/>
            <person name="Kelly S."/>
            <person name="Kershaw J.K."/>
            <person name="Khan Z."/>
            <person name="Kioschis P."/>
            <person name="Klages S."/>
            <person name="Knights A.J."/>
            <person name="Kosiura A."/>
            <person name="Kovar-Smith C."/>
            <person name="Laird G.K."/>
            <person name="Langford C."/>
            <person name="Lawlor S."/>
            <person name="Leversha M."/>
            <person name="Lewis L."/>
            <person name="Liu W."/>
            <person name="Lloyd C."/>
            <person name="Lloyd D.M."/>
            <person name="Loulseged H."/>
            <person name="Loveland J.E."/>
            <person name="Lovell J.D."/>
            <person name="Lozado R."/>
            <person name="Lu J."/>
            <person name="Lyne R."/>
            <person name="Ma J."/>
            <person name="Maheshwari M."/>
            <person name="Matthews L.H."/>
            <person name="McDowall J."/>
            <person name="McLaren S."/>
            <person name="McMurray A."/>
            <person name="Meidl P."/>
            <person name="Meitinger T."/>
            <person name="Milne S."/>
            <person name="Miner G."/>
            <person name="Mistry S.L."/>
            <person name="Morgan M."/>
            <person name="Morris S."/>
            <person name="Mueller I."/>
            <person name="Mullikin J.C."/>
            <person name="Nguyen N."/>
            <person name="Nordsiek G."/>
            <person name="Nyakatura G."/>
            <person name="O'dell C.N."/>
            <person name="Okwuonu G."/>
            <person name="Palmer S."/>
            <person name="Pandian R."/>
            <person name="Parker D."/>
            <person name="Parrish J."/>
            <person name="Pasternak S."/>
            <person name="Patel D."/>
            <person name="Pearce A.V."/>
            <person name="Pearson D.M."/>
            <person name="Pelan S.E."/>
            <person name="Perez L."/>
            <person name="Porter K.M."/>
            <person name="Ramsey Y."/>
            <person name="Reichwald K."/>
            <person name="Rhodes S."/>
            <person name="Ridler K.A."/>
            <person name="Schlessinger D."/>
            <person name="Schueler M.G."/>
            <person name="Sehra H.K."/>
            <person name="Shaw-Smith C."/>
            <person name="Shen H."/>
            <person name="Sheridan E.M."/>
            <person name="Shownkeen R."/>
            <person name="Skuce C.D."/>
            <person name="Smith M.L."/>
            <person name="Sotheran E.C."/>
            <person name="Steingruber H.E."/>
            <person name="Steward C.A."/>
            <person name="Storey R."/>
            <person name="Swann R.M."/>
            <person name="Swarbreck D."/>
            <person name="Tabor P.E."/>
            <person name="Taudien S."/>
            <person name="Taylor T."/>
            <person name="Teague B."/>
            <person name="Thomas K."/>
            <person name="Thorpe A."/>
            <person name="Timms K."/>
            <person name="Tracey A."/>
            <person name="Trevanion S."/>
            <person name="Tromans A.C."/>
            <person name="d'Urso M."/>
            <person name="Verduzco D."/>
            <person name="Villasana D."/>
            <person name="Waldron L."/>
            <person name="Wall M."/>
            <person name="Wang Q."/>
            <person name="Warren J."/>
            <person name="Warry G.L."/>
            <person name="Wei X."/>
            <person name="West A."/>
            <person name="Whitehead S.L."/>
            <person name="Whiteley M.N."/>
            <person name="Wilkinson J.E."/>
            <person name="Willey D.L."/>
            <person name="Williams G."/>
            <person name="Williams L."/>
            <person name="Williamson A."/>
            <person name="Williamson H."/>
            <person name="Wilming L."/>
            <person name="Woodmansey R.L."/>
            <person name="Wray P.W."/>
            <person name="Yen J."/>
            <person name="Zhang J."/>
            <person name="Zhou J."/>
            <person name="Zoghbi H."/>
            <person name="Zorilla S."/>
            <person name="Buck D."/>
            <person name="Reinhardt R."/>
            <person name="Poustka A."/>
            <person name="Rosenthal A."/>
            <person name="Lehrach H."/>
            <person name="Meindl A."/>
            <person name="Minx P.J."/>
            <person name="Hillier L.W."/>
            <person name="Willard H.F."/>
            <person name="Wilson R.K."/>
            <person name="Waterston R.H."/>
            <person name="Rice C.M."/>
            <person name="Vaudin M."/>
            <person name="Coulson A."/>
            <person name="Nelson D.L."/>
            <person name="Weinstock G."/>
            <person name="Sulston J.E."/>
            <person name="Durbin R.M."/>
            <person name="Hubbard T."/>
            <person name="Gibbs R.A."/>
            <person name="Beck S."/>
            <person name="Rogers J."/>
            <person name="Bentley D.R."/>
        </authorList>
    </citation>
    <scope>NUCLEOTIDE SEQUENCE [LARGE SCALE GENOMIC DNA]</scope>
</reference>
<reference key="4">
    <citation type="submission" date="2005-07" db="EMBL/GenBank/DDBJ databases">
        <authorList>
            <person name="Mural R.J."/>
            <person name="Istrail S."/>
            <person name="Sutton G.G."/>
            <person name="Florea L."/>
            <person name="Halpern A.L."/>
            <person name="Mobarry C.M."/>
            <person name="Lippert R."/>
            <person name="Walenz B."/>
            <person name="Shatkay H."/>
            <person name="Dew I."/>
            <person name="Miller J.R."/>
            <person name="Flanigan M.J."/>
            <person name="Edwards N.J."/>
            <person name="Bolanos R."/>
            <person name="Fasulo D."/>
            <person name="Halldorsson B.V."/>
            <person name="Hannenhalli S."/>
            <person name="Turner R."/>
            <person name="Yooseph S."/>
            <person name="Lu F."/>
            <person name="Nusskern D.R."/>
            <person name="Shue B.C."/>
            <person name="Zheng X.H."/>
            <person name="Zhong F."/>
            <person name="Delcher A.L."/>
            <person name="Huson D.H."/>
            <person name="Kravitz S.A."/>
            <person name="Mouchard L."/>
            <person name="Reinert K."/>
            <person name="Remington K.A."/>
            <person name="Clark A.G."/>
            <person name="Waterman M.S."/>
            <person name="Eichler E.E."/>
            <person name="Adams M.D."/>
            <person name="Hunkapiller M.W."/>
            <person name="Myers E.W."/>
            <person name="Venter J.C."/>
        </authorList>
    </citation>
    <scope>NUCLEOTIDE SEQUENCE [LARGE SCALE GENOMIC DNA]</scope>
</reference>
<reference key="5">
    <citation type="journal article" date="2004" name="Genome Res.">
        <title>The status, quality, and expansion of the NIH full-length cDNA project: the Mammalian Gene Collection (MGC).</title>
        <authorList>
            <consortium name="The MGC Project Team"/>
        </authorList>
    </citation>
    <scope>NUCLEOTIDE SEQUENCE [LARGE SCALE MRNA] (ISOFORM 1)</scope>
    <source>
        <tissue>Brain</tissue>
    </source>
</reference>
<reference key="6">
    <citation type="submission" date="2001-12" db="EMBL/GenBank/DDBJ databases">
        <title>New Homo sapiens gene from dental pulp cells.</title>
        <authorList>
            <person name="Chai Y.B."/>
            <person name="Zhao Z.L."/>
            <person name="Zhu F."/>
            <person name="Yan W."/>
            <person name="Chen N.C."/>
            <person name="Wang Q."/>
            <person name="Yue L."/>
            <person name="Chen S.M."/>
        </authorList>
    </citation>
    <scope>NUCLEOTIDE SEQUENCE [MRNA] OF 343-528</scope>
</reference>
<reference key="7">
    <citation type="journal article" date="2004" name="Biochem. Biophys. Res. Commun.">
        <title>Identification and characterization of taxilin isoforms.</title>
        <authorList>
            <person name="Nogami S."/>
            <person name="Satoh S."/>
            <person name="Tanaka-Nakadate S."/>
            <person name="Yoshida K."/>
            <person name="Nakano M."/>
            <person name="Terano A."/>
            <person name="Shirataki H."/>
        </authorList>
    </citation>
    <scope>TISSUE SPECIFICITY</scope>
    <scope>INTERACTION WITH STX1A; STX3A AND STX4A</scope>
</reference>
<reference key="8">
    <citation type="journal article" date="2005" name="J. Cell Biol.">
        <title>FIAT represses ATF4-mediated transcription to regulate bone mass in transgenic mice.</title>
        <authorList>
            <person name="Yu V.W."/>
            <person name="Ambartsoumian G."/>
            <person name="Verlinden L."/>
            <person name="Moir J.M."/>
            <person name="Prud'homme J."/>
            <person name="Gauthier C."/>
            <person name="Roughley P.J."/>
            <person name="St-Arnaud R."/>
        </authorList>
    </citation>
    <scope>FUNCTION</scope>
    <scope>SUBUNIT</scope>
    <scope>SUBCELLULAR LOCATION</scope>
</reference>
<reference key="9">
    <citation type="journal article" date="2006" name="Nat. Biotechnol.">
        <title>A probability-based approach for high-throughput protein phosphorylation analysis and site localization.</title>
        <authorList>
            <person name="Beausoleil S.A."/>
            <person name="Villen J."/>
            <person name="Gerber S.A."/>
            <person name="Rush J."/>
            <person name="Gygi S.P."/>
        </authorList>
    </citation>
    <scope>PHOSPHORYLATION [LARGE SCALE ANALYSIS] AT SER-97</scope>
    <scope>IDENTIFICATION BY MASS SPECTROMETRY [LARGE SCALE ANALYSIS]</scope>
    <source>
        <tissue>Cervix carcinoma</tissue>
    </source>
</reference>
<reference key="10">
    <citation type="journal article" date="2008" name="Proc. Natl. Acad. Sci. U.S.A.">
        <title>A quantitative atlas of mitotic phosphorylation.</title>
        <authorList>
            <person name="Dephoure N."/>
            <person name="Zhou C."/>
            <person name="Villen J."/>
            <person name="Beausoleil S.A."/>
            <person name="Bakalarski C.E."/>
            <person name="Elledge S.J."/>
            <person name="Gygi S.P."/>
        </authorList>
    </citation>
    <scope>PHOSPHORYLATION [LARGE SCALE ANALYSIS] AT SER-97 AND SER-105</scope>
    <scope>IDENTIFICATION BY MASS SPECTROMETRY [LARGE SCALE ANALYSIS]</scope>
    <source>
        <tissue>Cervix carcinoma</tissue>
    </source>
</reference>
<reference key="11">
    <citation type="journal article" date="2008" name="Toxicology">
        <title>Over-expression and siRNA of a novel environmental lipopolysaccharide-responding gene on the cell cycle of the human hepatoma-derived cell line HepG2.</title>
        <authorList>
            <person name="Du K."/>
            <person name="Chai Y."/>
            <person name="Hou L."/>
            <person name="Chang W."/>
            <person name="Chen S."/>
            <person name="Luo W."/>
            <person name="Cai T."/>
            <person name="Zhang X."/>
            <person name="Chen N."/>
            <person name="Chen Y."/>
            <person name="Chen J."/>
        </authorList>
    </citation>
    <scope>FUNCTION</scope>
    <scope>INDUCTION</scope>
</reference>
<reference key="12">
    <citation type="journal article" date="2009" name="Anal. Chem.">
        <title>Lys-N and trypsin cover complementary parts of the phosphoproteome in a refined SCX-based approach.</title>
        <authorList>
            <person name="Gauci S."/>
            <person name="Helbig A.O."/>
            <person name="Slijper M."/>
            <person name="Krijgsveld J."/>
            <person name="Heck A.J."/>
            <person name="Mohammed S."/>
        </authorList>
    </citation>
    <scope>IDENTIFICATION BY MASS SPECTROMETRY [LARGE SCALE ANALYSIS]</scope>
</reference>
<reference key="13">
    <citation type="journal article" date="2009" name="Sci. Signal.">
        <title>Quantitative phosphoproteomic analysis of T cell receptor signaling reveals system-wide modulation of protein-protein interactions.</title>
        <authorList>
            <person name="Mayya V."/>
            <person name="Lundgren D.H."/>
            <person name="Hwang S.-I."/>
            <person name="Rezaul K."/>
            <person name="Wu L."/>
            <person name="Eng J.K."/>
            <person name="Rodionov V."/>
            <person name="Han D.K."/>
        </authorList>
    </citation>
    <scope>PHOSPHORYLATION [LARGE SCALE ANALYSIS] AT SER-86</scope>
    <scope>IDENTIFICATION BY MASS SPECTROMETRY [LARGE SCALE ANALYSIS]</scope>
    <source>
        <tissue>Leukemic T-cell</tissue>
    </source>
</reference>
<reference key="14">
    <citation type="journal article" date="2010" name="Sci. Signal.">
        <title>Quantitative phosphoproteomics reveals widespread full phosphorylation site occupancy during mitosis.</title>
        <authorList>
            <person name="Olsen J.V."/>
            <person name="Vermeulen M."/>
            <person name="Santamaria A."/>
            <person name="Kumar C."/>
            <person name="Miller M.L."/>
            <person name="Jensen L.J."/>
            <person name="Gnad F."/>
            <person name="Cox J."/>
            <person name="Jensen T.S."/>
            <person name="Nigg E.A."/>
            <person name="Brunak S."/>
            <person name="Mann M."/>
        </authorList>
    </citation>
    <scope>PHOSPHORYLATION [LARGE SCALE ANALYSIS] AT SER-97 AND TYR-283</scope>
    <scope>IDENTIFICATION BY MASS SPECTROMETRY [LARGE SCALE ANALYSIS]</scope>
    <source>
        <tissue>Cervix carcinoma</tissue>
    </source>
</reference>
<reference key="15">
    <citation type="journal article" date="2011" name="BMC Syst. Biol.">
        <title>Initial characterization of the human central proteome.</title>
        <authorList>
            <person name="Burkard T.R."/>
            <person name="Planyavsky M."/>
            <person name="Kaupe I."/>
            <person name="Breitwieser F.P."/>
            <person name="Buerckstuemmer T."/>
            <person name="Bennett K.L."/>
            <person name="Superti-Furga G."/>
            <person name="Colinge J."/>
        </authorList>
    </citation>
    <scope>IDENTIFICATION BY MASS SPECTROMETRY [LARGE SCALE ANALYSIS]</scope>
</reference>
<reference key="16">
    <citation type="journal article" date="2011" name="Sci. Signal.">
        <title>System-wide temporal characterization of the proteome and phosphoproteome of human embryonic stem cell differentiation.</title>
        <authorList>
            <person name="Rigbolt K.T."/>
            <person name="Prokhorova T.A."/>
            <person name="Akimov V."/>
            <person name="Henningsen J."/>
            <person name="Johansen P.T."/>
            <person name="Kratchmarova I."/>
            <person name="Kassem M."/>
            <person name="Mann M."/>
            <person name="Olsen J.V."/>
            <person name="Blagoev B."/>
        </authorList>
    </citation>
    <scope>PHOSPHORYLATION [LARGE SCALE ANALYSIS] AT SER-517</scope>
    <scope>IDENTIFICATION BY MASS SPECTROMETRY [LARGE SCALE ANALYSIS]</scope>
</reference>
<reference key="17">
    <citation type="journal article" date="2013" name="J. Proteome Res.">
        <title>Toward a comprehensive characterization of a human cancer cell phosphoproteome.</title>
        <authorList>
            <person name="Zhou H."/>
            <person name="Di Palma S."/>
            <person name="Preisinger C."/>
            <person name="Peng M."/>
            <person name="Polat A.N."/>
            <person name="Heck A.J."/>
            <person name="Mohammed S."/>
        </authorList>
    </citation>
    <scope>PHOSPHORYLATION [LARGE SCALE ANALYSIS] AT SER-86; SER-97 AND SER-105</scope>
    <scope>IDENTIFICATION BY MASS SPECTROMETRY [LARGE SCALE ANALYSIS]</scope>
    <source>
        <tissue>Cervix carcinoma</tissue>
        <tissue>Erythroleukemia</tissue>
    </source>
</reference>
<reference key="18">
    <citation type="journal article" date="2014" name="J. Proteomics">
        <title>An enzyme assisted RP-RPLC approach for in-depth analysis of human liver phosphoproteome.</title>
        <authorList>
            <person name="Bian Y."/>
            <person name="Song C."/>
            <person name="Cheng K."/>
            <person name="Dong M."/>
            <person name="Wang F."/>
            <person name="Huang J."/>
            <person name="Sun D."/>
            <person name="Wang L."/>
            <person name="Ye M."/>
            <person name="Zou H."/>
        </authorList>
    </citation>
    <scope>PHOSPHORYLATION [LARGE SCALE ANALYSIS] AT SER-105</scope>
    <scope>IDENTIFICATION BY MASS SPECTROMETRY [LARGE SCALE ANALYSIS]</scope>
    <source>
        <tissue>Liver</tissue>
    </source>
</reference>
<reference key="19">
    <citation type="journal article" date="2014" name="Mol. Cell. Proteomics">
        <title>Immunoaffinity enrichment and mass spectrometry analysis of protein methylation.</title>
        <authorList>
            <person name="Guo A."/>
            <person name="Gu H."/>
            <person name="Zhou J."/>
            <person name="Mulhern D."/>
            <person name="Wang Y."/>
            <person name="Lee K.A."/>
            <person name="Yang V."/>
            <person name="Aguiar M."/>
            <person name="Kornhauser J."/>
            <person name="Jia X."/>
            <person name="Ren J."/>
            <person name="Beausoleil S.A."/>
            <person name="Silva J.C."/>
            <person name="Vemulapalli V."/>
            <person name="Bedford M.T."/>
            <person name="Comb M.J."/>
        </authorList>
    </citation>
    <scope>METHYLATION [LARGE SCALE ANALYSIS] AT ARG-12 AND ARG-24</scope>
    <scope>IDENTIFICATION BY MASS SPECTROMETRY [LARGE SCALE ANALYSIS]</scope>
    <source>
        <tissue>Colon carcinoma</tissue>
    </source>
</reference>
<accession>Q9NUQ3</accession>
<accession>Q2KQ75</accession>
<accession>Q5JNZ7</accession>
<accession>Q9P0X1</accession>
<keyword id="KW-0025">Alternative splicing</keyword>
<keyword id="KW-0131">Cell cycle</keyword>
<keyword id="KW-0175">Coiled coil</keyword>
<keyword id="KW-0963">Cytoplasm</keyword>
<keyword id="KW-0472">Membrane</keyword>
<keyword id="KW-0488">Methylation</keyword>
<keyword id="KW-0539">Nucleus</keyword>
<keyword id="KW-0597">Phosphoprotein</keyword>
<keyword id="KW-1267">Proteomics identification</keyword>
<keyword id="KW-1185">Reference proteome</keyword>
<keyword id="KW-0804">Transcription</keyword>
<keyword id="KW-0805">Transcription regulation</keyword>